<gene>
    <name evidence="1" type="primary">murA</name>
    <name type="ordered locus">Acid_7425</name>
</gene>
<reference key="1">
    <citation type="journal article" date="2009" name="Appl. Environ. Microbiol.">
        <title>Three genomes from the phylum Acidobacteria provide insight into the lifestyles of these microorganisms in soils.</title>
        <authorList>
            <person name="Ward N.L."/>
            <person name="Challacombe J.F."/>
            <person name="Janssen P.H."/>
            <person name="Henrissat B."/>
            <person name="Coutinho P.M."/>
            <person name="Wu M."/>
            <person name="Xie G."/>
            <person name="Haft D.H."/>
            <person name="Sait M."/>
            <person name="Badger J."/>
            <person name="Barabote R.D."/>
            <person name="Bradley B."/>
            <person name="Brettin T.S."/>
            <person name="Brinkac L.M."/>
            <person name="Bruce D."/>
            <person name="Creasy T."/>
            <person name="Daugherty S.C."/>
            <person name="Davidsen T.M."/>
            <person name="DeBoy R.T."/>
            <person name="Detter J.C."/>
            <person name="Dodson R.J."/>
            <person name="Durkin A.S."/>
            <person name="Ganapathy A."/>
            <person name="Gwinn-Giglio M."/>
            <person name="Han C.S."/>
            <person name="Khouri H."/>
            <person name="Kiss H."/>
            <person name="Kothari S.P."/>
            <person name="Madupu R."/>
            <person name="Nelson K.E."/>
            <person name="Nelson W.C."/>
            <person name="Paulsen I."/>
            <person name="Penn K."/>
            <person name="Ren Q."/>
            <person name="Rosovitz M.J."/>
            <person name="Selengut J.D."/>
            <person name="Shrivastava S."/>
            <person name="Sullivan S.A."/>
            <person name="Tapia R."/>
            <person name="Thompson L.S."/>
            <person name="Watkins K.L."/>
            <person name="Yang Q."/>
            <person name="Yu C."/>
            <person name="Zafar N."/>
            <person name="Zhou L."/>
            <person name="Kuske C.R."/>
        </authorList>
    </citation>
    <scope>NUCLEOTIDE SEQUENCE [LARGE SCALE GENOMIC DNA]</scope>
    <source>
        <strain>Ellin6076</strain>
    </source>
</reference>
<organism>
    <name type="scientific">Solibacter usitatus (strain Ellin6076)</name>
    <dbReference type="NCBI Taxonomy" id="234267"/>
    <lineage>
        <taxon>Bacteria</taxon>
        <taxon>Pseudomonadati</taxon>
        <taxon>Acidobacteriota</taxon>
        <taxon>Terriglobia</taxon>
        <taxon>Bryobacterales</taxon>
        <taxon>Solibacteraceae</taxon>
        <taxon>Candidatus Solibacter</taxon>
    </lineage>
</organism>
<protein>
    <recommendedName>
        <fullName evidence="1">UDP-N-acetylglucosamine 1-carboxyvinyltransferase</fullName>
        <ecNumber evidence="1">2.5.1.7</ecNumber>
    </recommendedName>
    <alternativeName>
        <fullName evidence="1">Enoylpyruvate transferase</fullName>
    </alternativeName>
    <alternativeName>
        <fullName evidence="1">UDP-N-acetylglucosamine enolpyruvyl transferase</fullName>
        <shortName evidence="1">EPT</shortName>
    </alternativeName>
</protein>
<feature type="chain" id="PRO_1000023111" description="UDP-N-acetylglucosamine 1-carboxyvinyltransferase">
    <location>
        <begin position="1"/>
        <end position="418"/>
    </location>
</feature>
<feature type="active site" description="Proton donor" evidence="1">
    <location>
        <position position="116"/>
    </location>
</feature>
<feature type="binding site" evidence="1">
    <location>
        <begin position="22"/>
        <end position="23"/>
    </location>
    <ligand>
        <name>phosphoenolpyruvate</name>
        <dbReference type="ChEBI" id="CHEBI:58702"/>
    </ligand>
</feature>
<feature type="binding site" evidence="1">
    <location>
        <position position="92"/>
    </location>
    <ligand>
        <name>UDP-N-acetyl-alpha-D-glucosamine</name>
        <dbReference type="ChEBI" id="CHEBI:57705"/>
    </ligand>
</feature>
<feature type="binding site" evidence="1">
    <location>
        <position position="306"/>
    </location>
    <ligand>
        <name>UDP-N-acetyl-alpha-D-glucosamine</name>
        <dbReference type="ChEBI" id="CHEBI:57705"/>
    </ligand>
</feature>
<feature type="binding site" evidence="1">
    <location>
        <position position="328"/>
    </location>
    <ligand>
        <name>UDP-N-acetyl-alpha-D-glucosamine</name>
        <dbReference type="ChEBI" id="CHEBI:57705"/>
    </ligand>
</feature>
<feature type="modified residue" description="2-(S-cysteinyl)pyruvic acid O-phosphothioketal" evidence="1">
    <location>
        <position position="116"/>
    </location>
</feature>
<accession>Q01PT7</accession>
<dbReference type="EC" id="2.5.1.7" evidence="1"/>
<dbReference type="EMBL" id="CP000473">
    <property type="protein sequence ID" value="ABJ88333.1"/>
    <property type="molecule type" value="Genomic_DNA"/>
</dbReference>
<dbReference type="SMR" id="Q01PT7"/>
<dbReference type="FunCoup" id="Q01PT7">
    <property type="interactions" value="491"/>
</dbReference>
<dbReference type="STRING" id="234267.Acid_7425"/>
<dbReference type="KEGG" id="sus:Acid_7425"/>
<dbReference type="eggNOG" id="COG0766">
    <property type="taxonomic scope" value="Bacteria"/>
</dbReference>
<dbReference type="HOGENOM" id="CLU_027387_0_0_0"/>
<dbReference type="InParanoid" id="Q01PT7"/>
<dbReference type="OrthoDB" id="9803760at2"/>
<dbReference type="UniPathway" id="UPA00219"/>
<dbReference type="GO" id="GO:0005737">
    <property type="term" value="C:cytoplasm"/>
    <property type="evidence" value="ECO:0007669"/>
    <property type="project" value="UniProtKB-SubCell"/>
</dbReference>
<dbReference type="GO" id="GO:0008760">
    <property type="term" value="F:UDP-N-acetylglucosamine 1-carboxyvinyltransferase activity"/>
    <property type="evidence" value="ECO:0007669"/>
    <property type="project" value="UniProtKB-UniRule"/>
</dbReference>
<dbReference type="GO" id="GO:0051301">
    <property type="term" value="P:cell division"/>
    <property type="evidence" value="ECO:0007669"/>
    <property type="project" value="UniProtKB-KW"/>
</dbReference>
<dbReference type="GO" id="GO:0071555">
    <property type="term" value="P:cell wall organization"/>
    <property type="evidence" value="ECO:0007669"/>
    <property type="project" value="UniProtKB-KW"/>
</dbReference>
<dbReference type="GO" id="GO:0009252">
    <property type="term" value="P:peptidoglycan biosynthetic process"/>
    <property type="evidence" value="ECO:0007669"/>
    <property type="project" value="UniProtKB-UniRule"/>
</dbReference>
<dbReference type="GO" id="GO:0008360">
    <property type="term" value="P:regulation of cell shape"/>
    <property type="evidence" value="ECO:0007669"/>
    <property type="project" value="UniProtKB-KW"/>
</dbReference>
<dbReference type="GO" id="GO:0019277">
    <property type="term" value="P:UDP-N-acetylgalactosamine biosynthetic process"/>
    <property type="evidence" value="ECO:0007669"/>
    <property type="project" value="InterPro"/>
</dbReference>
<dbReference type="CDD" id="cd01555">
    <property type="entry name" value="UdpNAET"/>
    <property type="match status" value="1"/>
</dbReference>
<dbReference type="FunFam" id="3.65.10.10:FF:000001">
    <property type="entry name" value="UDP-N-acetylglucosamine 1-carboxyvinyltransferase"/>
    <property type="match status" value="1"/>
</dbReference>
<dbReference type="Gene3D" id="3.65.10.10">
    <property type="entry name" value="Enolpyruvate transferase domain"/>
    <property type="match status" value="2"/>
</dbReference>
<dbReference type="HAMAP" id="MF_00111">
    <property type="entry name" value="MurA"/>
    <property type="match status" value="1"/>
</dbReference>
<dbReference type="InterPro" id="IPR001986">
    <property type="entry name" value="Enolpyruvate_Tfrase_dom"/>
</dbReference>
<dbReference type="InterPro" id="IPR036968">
    <property type="entry name" value="Enolpyruvate_Tfrase_sf"/>
</dbReference>
<dbReference type="InterPro" id="IPR050068">
    <property type="entry name" value="MurA_subfamily"/>
</dbReference>
<dbReference type="InterPro" id="IPR013792">
    <property type="entry name" value="RNA3'P_cycl/enolpyr_Trfase_a/b"/>
</dbReference>
<dbReference type="InterPro" id="IPR005750">
    <property type="entry name" value="UDP_GlcNAc_COvinyl_MurA"/>
</dbReference>
<dbReference type="NCBIfam" id="TIGR01072">
    <property type="entry name" value="murA"/>
    <property type="match status" value="1"/>
</dbReference>
<dbReference type="NCBIfam" id="NF006873">
    <property type="entry name" value="PRK09369.1"/>
    <property type="match status" value="1"/>
</dbReference>
<dbReference type="PANTHER" id="PTHR43783">
    <property type="entry name" value="UDP-N-ACETYLGLUCOSAMINE 1-CARBOXYVINYLTRANSFERASE"/>
    <property type="match status" value="1"/>
</dbReference>
<dbReference type="PANTHER" id="PTHR43783:SF1">
    <property type="entry name" value="UDP-N-ACETYLGLUCOSAMINE 1-CARBOXYVINYLTRANSFERASE"/>
    <property type="match status" value="1"/>
</dbReference>
<dbReference type="Pfam" id="PF00275">
    <property type="entry name" value="EPSP_synthase"/>
    <property type="match status" value="1"/>
</dbReference>
<dbReference type="SUPFAM" id="SSF55205">
    <property type="entry name" value="EPT/RTPC-like"/>
    <property type="match status" value="1"/>
</dbReference>
<evidence type="ECO:0000255" key="1">
    <source>
        <dbReference type="HAMAP-Rule" id="MF_00111"/>
    </source>
</evidence>
<proteinExistence type="inferred from homology"/>
<comment type="function">
    <text evidence="1">Cell wall formation. Adds enolpyruvyl to UDP-N-acetylglucosamine.</text>
</comment>
<comment type="catalytic activity">
    <reaction evidence="1">
        <text>phosphoenolpyruvate + UDP-N-acetyl-alpha-D-glucosamine = UDP-N-acetyl-3-O-(1-carboxyvinyl)-alpha-D-glucosamine + phosphate</text>
        <dbReference type="Rhea" id="RHEA:18681"/>
        <dbReference type="ChEBI" id="CHEBI:43474"/>
        <dbReference type="ChEBI" id="CHEBI:57705"/>
        <dbReference type="ChEBI" id="CHEBI:58702"/>
        <dbReference type="ChEBI" id="CHEBI:68483"/>
        <dbReference type="EC" id="2.5.1.7"/>
    </reaction>
</comment>
<comment type="pathway">
    <text evidence="1">Cell wall biogenesis; peptidoglycan biosynthesis.</text>
</comment>
<comment type="subcellular location">
    <subcellularLocation>
        <location evidence="1">Cytoplasm</location>
    </subcellularLocation>
</comment>
<comment type="similarity">
    <text evidence="1">Belongs to the EPSP synthase family. MurA subfamily.</text>
</comment>
<sequence>MDKFVITGGVPLKGTIPTNGSKNSALPALAAALLTAEPVTLHRVPRVRDIRTMERLLVDIGTTVDVEGETVRLRTERIVSPEAPYELVKTMRASSLVLGPLVARSGRARVSLPGGCAIGARPINLHIFGLEQLGAKINQTHGYIEAVAPDGLRGAVVHFDRITVTGTEDLMMAAVLAKGETLLRNAAREPEVVDLAELLIKMGAKIEGAGTSTIRIQGVESLGGAVHAIIADRIEAGTFLVAGAITGGDLTVTDCIPEHVGALVSKLQQAGVDVTQPSETTVRVRGTGRLRSVDMTTEEYPGFATDLQAQYMALMTQAEGIAVVIENIFENRFMHAQELARMGANIRIDGRQAIVAGPRELTGAGVIASDLRASASLVLGALVARGETVIDRVYHIDRGYEKIEAKLAGVGAKIRRVE</sequence>
<name>MURA_SOLUE</name>
<keyword id="KW-0131">Cell cycle</keyword>
<keyword id="KW-0132">Cell division</keyword>
<keyword id="KW-0133">Cell shape</keyword>
<keyword id="KW-0961">Cell wall biogenesis/degradation</keyword>
<keyword id="KW-0963">Cytoplasm</keyword>
<keyword id="KW-0573">Peptidoglycan synthesis</keyword>
<keyword id="KW-0670">Pyruvate</keyword>
<keyword id="KW-0808">Transferase</keyword>